<organism>
    <name type="scientific">Escherichia coli (strain SE11)</name>
    <dbReference type="NCBI Taxonomy" id="409438"/>
    <lineage>
        <taxon>Bacteria</taxon>
        <taxon>Pseudomonadati</taxon>
        <taxon>Pseudomonadota</taxon>
        <taxon>Gammaproteobacteria</taxon>
        <taxon>Enterobacterales</taxon>
        <taxon>Enterobacteriaceae</taxon>
        <taxon>Escherichia</taxon>
    </lineage>
</organism>
<protein>
    <recommendedName>
        <fullName evidence="1">Ferrochelatase</fullName>
        <ecNumber evidence="1">4.98.1.1</ecNumber>
    </recommendedName>
    <alternativeName>
        <fullName evidence="1">Heme synthase</fullName>
    </alternativeName>
    <alternativeName>
        <fullName evidence="1">Protoheme ferro-lyase</fullName>
    </alternativeName>
</protein>
<name>HEMH_ECOSE</name>
<reference key="1">
    <citation type="journal article" date="2008" name="DNA Res.">
        <title>Complete genome sequence and comparative analysis of the wild-type commensal Escherichia coli strain SE11 isolated from a healthy adult.</title>
        <authorList>
            <person name="Oshima K."/>
            <person name="Toh H."/>
            <person name="Ogura Y."/>
            <person name="Sasamoto H."/>
            <person name="Morita H."/>
            <person name="Park S.-H."/>
            <person name="Ooka T."/>
            <person name="Iyoda S."/>
            <person name="Taylor T.D."/>
            <person name="Hayashi T."/>
            <person name="Itoh K."/>
            <person name="Hattori M."/>
        </authorList>
    </citation>
    <scope>NUCLEOTIDE SEQUENCE [LARGE SCALE GENOMIC DNA]</scope>
    <source>
        <strain>SE11</strain>
    </source>
</reference>
<keyword id="KW-0963">Cytoplasm</keyword>
<keyword id="KW-0350">Heme biosynthesis</keyword>
<keyword id="KW-0408">Iron</keyword>
<keyword id="KW-0456">Lyase</keyword>
<keyword id="KW-0479">Metal-binding</keyword>
<keyword id="KW-0627">Porphyrin biosynthesis</keyword>
<accession>B6I0C7</accession>
<evidence type="ECO:0000255" key="1">
    <source>
        <dbReference type="HAMAP-Rule" id="MF_00323"/>
    </source>
</evidence>
<gene>
    <name evidence="1" type="primary">hemH</name>
    <name type="ordered locus">ECSE_0500</name>
</gene>
<feature type="chain" id="PRO_1000116044" description="Ferrochelatase">
    <location>
        <begin position="1"/>
        <end position="320"/>
    </location>
</feature>
<feature type="binding site" evidence="1">
    <location>
        <position position="194"/>
    </location>
    <ligand>
        <name>Fe cation</name>
        <dbReference type="ChEBI" id="CHEBI:24875"/>
    </ligand>
</feature>
<feature type="binding site" evidence="1">
    <location>
        <position position="275"/>
    </location>
    <ligand>
        <name>Fe cation</name>
        <dbReference type="ChEBI" id="CHEBI:24875"/>
    </ligand>
</feature>
<comment type="function">
    <text evidence="1">Catalyzes the ferrous insertion into protoporphyrin IX.</text>
</comment>
<comment type="catalytic activity">
    <reaction evidence="1">
        <text>heme b + 2 H(+) = protoporphyrin IX + Fe(2+)</text>
        <dbReference type="Rhea" id="RHEA:22584"/>
        <dbReference type="ChEBI" id="CHEBI:15378"/>
        <dbReference type="ChEBI" id="CHEBI:29033"/>
        <dbReference type="ChEBI" id="CHEBI:57306"/>
        <dbReference type="ChEBI" id="CHEBI:60344"/>
        <dbReference type="EC" id="4.98.1.1"/>
    </reaction>
</comment>
<comment type="pathway">
    <text evidence="1">Porphyrin-containing compound metabolism; protoheme biosynthesis; protoheme from protoporphyrin-IX: step 1/1.</text>
</comment>
<comment type="subunit">
    <text evidence="1">Monomer.</text>
</comment>
<comment type="subcellular location">
    <subcellularLocation>
        <location evidence="1">Cytoplasm</location>
    </subcellularLocation>
</comment>
<comment type="similarity">
    <text evidence="1">Belongs to the ferrochelatase family.</text>
</comment>
<dbReference type="EC" id="4.98.1.1" evidence="1"/>
<dbReference type="EMBL" id="AP009240">
    <property type="protein sequence ID" value="BAG76024.1"/>
    <property type="molecule type" value="Genomic_DNA"/>
</dbReference>
<dbReference type="RefSeq" id="WP_001250088.1">
    <property type="nucleotide sequence ID" value="NC_011415.1"/>
</dbReference>
<dbReference type="SMR" id="B6I0C7"/>
<dbReference type="KEGG" id="ecy:ECSE_0500"/>
<dbReference type="HOGENOM" id="CLU_018884_0_0_6"/>
<dbReference type="UniPathway" id="UPA00252">
    <property type="reaction ID" value="UER00325"/>
</dbReference>
<dbReference type="Proteomes" id="UP000008199">
    <property type="component" value="Chromosome"/>
</dbReference>
<dbReference type="GO" id="GO:0005737">
    <property type="term" value="C:cytoplasm"/>
    <property type="evidence" value="ECO:0007669"/>
    <property type="project" value="UniProtKB-SubCell"/>
</dbReference>
<dbReference type="GO" id="GO:0004325">
    <property type="term" value="F:ferrochelatase activity"/>
    <property type="evidence" value="ECO:0007669"/>
    <property type="project" value="UniProtKB-UniRule"/>
</dbReference>
<dbReference type="GO" id="GO:0046872">
    <property type="term" value="F:metal ion binding"/>
    <property type="evidence" value="ECO:0007669"/>
    <property type="project" value="UniProtKB-KW"/>
</dbReference>
<dbReference type="GO" id="GO:0006783">
    <property type="term" value="P:heme biosynthetic process"/>
    <property type="evidence" value="ECO:0007669"/>
    <property type="project" value="UniProtKB-UniRule"/>
</dbReference>
<dbReference type="CDD" id="cd00419">
    <property type="entry name" value="Ferrochelatase_C"/>
    <property type="match status" value="1"/>
</dbReference>
<dbReference type="CDD" id="cd03411">
    <property type="entry name" value="Ferrochelatase_N"/>
    <property type="match status" value="1"/>
</dbReference>
<dbReference type="FunFam" id="3.40.50.1400:FF:000004">
    <property type="entry name" value="Ferrochelatase"/>
    <property type="match status" value="1"/>
</dbReference>
<dbReference type="Gene3D" id="3.40.50.1400">
    <property type="match status" value="2"/>
</dbReference>
<dbReference type="HAMAP" id="MF_00323">
    <property type="entry name" value="Ferrochelatase"/>
    <property type="match status" value="1"/>
</dbReference>
<dbReference type="InterPro" id="IPR001015">
    <property type="entry name" value="Ferrochelatase"/>
</dbReference>
<dbReference type="InterPro" id="IPR019772">
    <property type="entry name" value="Ferrochelatase_AS"/>
</dbReference>
<dbReference type="InterPro" id="IPR033644">
    <property type="entry name" value="Ferrochelatase_C"/>
</dbReference>
<dbReference type="InterPro" id="IPR033659">
    <property type="entry name" value="Ferrochelatase_N"/>
</dbReference>
<dbReference type="NCBIfam" id="TIGR00109">
    <property type="entry name" value="hemH"/>
    <property type="match status" value="1"/>
</dbReference>
<dbReference type="PANTHER" id="PTHR11108">
    <property type="entry name" value="FERROCHELATASE"/>
    <property type="match status" value="1"/>
</dbReference>
<dbReference type="PANTHER" id="PTHR11108:SF1">
    <property type="entry name" value="FERROCHELATASE, MITOCHONDRIAL"/>
    <property type="match status" value="1"/>
</dbReference>
<dbReference type="Pfam" id="PF00762">
    <property type="entry name" value="Ferrochelatase"/>
    <property type="match status" value="1"/>
</dbReference>
<dbReference type="SUPFAM" id="SSF53800">
    <property type="entry name" value="Chelatase"/>
    <property type="match status" value="1"/>
</dbReference>
<dbReference type="PROSITE" id="PS00534">
    <property type="entry name" value="FERROCHELATASE"/>
    <property type="match status" value="1"/>
</dbReference>
<sequence>MRQTKTGILLANLGTPDAPTPEAVKRYLKQFLSDRRVVDTSRLLWWPLLRGVILPLRSPRVAKLYASVWMEDGSPLMVYSRQQQQALAQRLPDTPVALGMSYGSPSLESAVDELLAEHVDHIVVLPLYPQFSCSTVGAVWDELARILARKRSIPGISFIRDYADNHDYINALANSVRASFAKHGEPDLLLLSYHGIPQRYADEGDDYPQRCRTTTRELASALGMAPEKVMMTFQSRFGREPWLMPYTDETLKMLGEKGVGHIQVMCPGFAADCLETLEEIAEQNREVFLGAGGKKYEYIPALNATPEHIEMMANLVAAYR</sequence>
<proteinExistence type="inferred from homology"/>